<dbReference type="EC" id="3.4.21.92" evidence="1"/>
<dbReference type="EMBL" id="CP000802">
    <property type="protein sequence ID" value="ABV04899.1"/>
    <property type="molecule type" value="Genomic_DNA"/>
</dbReference>
<dbReference type="RefSeq" id="WP_000122253.1">
    <property type="nucleotide sequence ID" value="NC_009800.1"/>
</dbReference>
<dbReference type="BMRB" id="A7ZX95"/>
<dbReference type="SMR" id="A7ZX95"/>
<dbReference type="MEROPS" id="S14.001"/>
<dbReference type="GeneID" id="93777017"/>
<dbReference type="KEGG" id="ecx:EcHS_A0514"/>
<dbReference type="HOGENOM" id="CLU_058707_3_2_6"/>
<dbReference type="GO" id="GO:0005737">
    <property type="term" value="C:cytoplasm"/>
    <property type="evidence" value="ECO:0007669"/>
    <property type="project" value="UniProtKB-SubCell"/>
</dbReference>
<dbReference type="GO" id="GO:0009368">
    <property type="term" value="C:endopeptidase Clp complex"/>
    <property type="evidence" value="ECO:0007669"/>
    <property type="project" value="TreeGrafter"/>
</dbReference>
<dbReference type="GO" id="GO:0004176">
    <property type="term" value="F:ATP-dependent peptidase activity"/>
    <property type="evidence" value="ECO:0007669"/>
    <property type="project" value="InterPro"/>
</dbReference>
<dbReference type="GO" id="GO:0051117">
    <property type="term" value="F:ATPase binding"/>
    <property type="evidence" value="ECO:0007669"/>
    <property type="project" value="TreeGrafter"/>
</dbReference>
<dbReference type="GO" id="GO:0004252">
    <property type="term" value="F:serine-type endopeptidase activity"/>
    <property type="evidence" value="ECO:0007669"/>
    <property type="project" value="UniProtKB-UniRule"/>
</dbReference>
<dbReference type="GO" id="GO:0006515">
    <property type="term" value="P:protein quality control for misfolded or incompletely synthesized proteins"/>
    <property type="evidence" value="ECO:0007669"/>
    <property type="project" value="TreeGrafter"/>
</dbReference>
<dbReference type="CDD" id="cd07017">
    <property type="entry name" value="S14_ClpP_2"/>
    <property type="match status" value="1"/>
</dbReference>
<dbReference type="FunFam" id="3.90.226.10:FF:000001">
    <property type="entry name" value="ATP-dependent Clp protease proteolytic subunit"/>
    <property type="match status" value="1"/>
</dbReference>
<dbReference type="Gene3D" id="3.90.226.10">
    <property type="entry name" value="2-enoyl-CoA Hydratase, Chain A, domain 1"/>
    <property type="match status" value="1"/>
</dbReference>
<dbReference type="HAMAP" id="MF_00444">
    <property type="entry name" value="ClpP"/>
    <property type="match status" value="1"/>
</dbReference>
<dbReference type="InterPro" id="IPR001907">
    <property type="entry name" value="ClpP"/>
</dbReference>
<dbReference type="InterPro" id="IPR029045">
    <property type="entry name" value="ClpP/crotonase-like_dom_sf"/>
</dbReference>
<dbReference type="InterPro" id="IPR023562">
    <property type="entry name" value="ClpP/TepA"/>
</dbReference>
<dbReference type="InterPro" id="IPR033135">
    <property type="entry name" value="ClpP_His_AS"/>
</dbReference>
<dbReference type="InterPro" id="IPR018215">
    <property type="entry name" value="ClpP_Ser_AS"/>
</dbReference>
<dbReference type="NCBIfam" id="TIGR00493">
    <property type="entry name" value="clpP"/>
    <property type="match status" value="1"/>
</dbReference>
<dbReference type="NCBIfam" id="NF001368">
    <property type="entry name" value="PRK00277.1"/>
    <property type="match status" value="1"/>
</dbReference>
<dbReference type="NCBIfam" id="NF009205">
    <property type="entry name" value="PRK12553.1"/>
    <property type="match status" value="1"/>
</dbReference>
<dbReference type="PANTHER" id="PTHR10381">
    <property type="entry name" value="ATP-DEPENDENT CLP PROTEASE PROTEOLYTIC SUBUNIT"/>
    <property type="match status" value="1"/>
</dbReference>
<dbReference type="PANTHER" id="PTHR10381:SF70">
    <property type="entry name" value="ATP-DEPENDENT CLP PROTEASE PROTEOLYTIC SUBUNIT"/>
    <property type="match status" value="1"/>
</dbReference>
<dbReference type="Pfam" id="PF00574">
    <property type="entry name" value="CLP_protease"/>
    <property type="match status" value="1"/>
</dbReference>
<dbReference type="PRINTS" id="PR00127">
    <property type="entry name" value="CLPPROTEASEP"/>
</dbReference>
<dbReference type="SUPFAM" id="SSF52096">
    <property type="entry name" value="ClpP/crotonase"/>
    <property type="match status" value="1"/>
</dbReference>
<dbReference type="PROSITE" id="PS00382">
    <property type="entry name" value="CLP_PROTEASE_HIS"/>
    <property type="match status" value="1"/>
</dbReference>
<dbReference type="PROSITE" id="PS00381">
    <property type="entry name" value="CLP_PROTEASE_SER"/>
    <property type="match status" value="1"/>
</dbReference>
<keyword id="KW-0963">Cytoplasm</keyword>
<keyword id="KW-0378">Hydrolase</keyword>
<keyword id="KW-0645">Protease</keyword>
<keyword id="KW-0720">Serine protease</keyword>
<name>CLPP_ECOHS</name>
<reference key="1">
    <citation type="journal article" date="2008" name="J. Bacteriol.">
        <title>The pangenome structure of Escherichia coli: comparative genomic analysis of E. coli commensal and pathogenic isolates.</title>
        <authorList>
            <person name="Rasko D.A."/>
            <person name="Rosovitz M.J."/>
            <person name="Myers G.S.A."/>
            <person name="Mongodin E.F."/>
            <person name="Fricke W.F."/>
            <person name="Gajer P."/>
            <person name="Crabtree J."/>
            <person name="Sebaihia M."/>
            <person name="Thomson N.R."/>
            <person name="Chaudhuri R."/>
            <person name="Henderson I.R."/>
            <person name="Sperandio V."/>
            <person name="Ravel J."/>
        </authorList>
    </citation>
    <scope>NUCLEOTIDE SEQUENCE [LARGE SCALE GENOMIC DNA]</scope>
    <source>
        <strain>HS</strain>
    </source>
</reference>
<protein>
    <recommendedName>
        <fullName evidence="1">ATP-dependent Clp protease proteolytic subunit</fullName>
        <ecNumber evidence="1">3.4.21.92</ecNumber>
    </recommendedName>
    <alternativeName>
        <fullName evidence="1">Endopeptidase Clp</fullName>
    </alternativeName>
</protein>
<comment type="function">
    <text evidence="1">Cleaves peptides in various proteins in a process that requires ATP hydrolysis. Has a chymotrypsin-like activity. Plays a major role in the degradation of misfolded proteins.</text>
</comment>
<comment type="catalytic activity">
    <reaction evidence="1">
        <text>Hydrolysis of proteins to small peptides in the presence of ATP and magnesium. alpha-casein is the usual test substrate. In the absence of ATP, only oligopeptides shorter than five residues are hydrolyzed (such as succinyl-Leu-Tyr-|-NHMec, and Leu-Tyr-Leu-|-Tyr-Trp, in which cleavage of the -Tyr-|-Leu- and -Tyr-|-Trp bonds also occurs).</text>
        <dbReference type="EC" id="3.4.21.92"/>
    </reaction>
</comment>
<comment type="subunit">
    <text evidence="1">Fourteen ClpP subunits assemble into 2 heptameric rings which stack back to back to give a disk-like structure with a central cavity, resembling the structure of eukaryotic proteasomes. Component of the ClpAP and ClpXP complexes.</text>
</comment>
<comment type="subcellular location">
    <subcellularLocation>
        <location evidence="1">Cytoplasm</location>
    </subcellularLocation>
</comment>
<comment type="similarity">
    <text evidence="1">Belongs to the peptidase S14 family.</text>
</comment>
<evidence type="ECO:0000255" key="1">
    <source>
        <dbReference type="HAMAP-Rule" id="MF_00444"/>
    </source>
</evidence>
<gene>
    <name evidence="1" type="primary">clpP</name>
    <name type="ordered locus">EcHS_A0514</name>
</gene>
<organism>
    <name type="scientific">Escherichia coli O9:H4 (strain HS)</name>
    <dbReference type="NCBI Taxonomy" id="331112"/>
    <lineage>
        <taxon>Bacteria</taxon>
        <taxon>Pseudomonadati</taxon>
        <taxon>Pseudomonadota</taxon>
        <taxon>Gammaproteobacteria</taxon>
        <taxon>Enterobacterales</taxon>
        <taxon>Enterobacteriaceae</taxon>
        <taxon>Escherichia</taxon>
    </lineage>
</organism>
<proteinExistence type="inferred from homology"/>
<accession>A7ZX95</accession>
<sequence>MSYSGERDNFAPHMALVPMVIEQTSRGERSFDIYSRLLKERVIFLTGQVEDHMANLIVAQMLFLEAENPEKDIYLYINSPGGVITAGMSIYDTMQFIKPDVSTICMGQAASMGAFLLTAGAKGKRFCLPNSRVMIHQPLGGYQGQATDIEIHAREILKVKGRMNELMALHTGQSLEQIERDTERDRFLSAPEAVEYGLVDSILTHRN</sequence>
<feature type="chain" id="PRO_1000060260" description="ATP-dependent Clp protease proteolytic subunit">
    <location>
        <begin position="1"/>
        <end position="207"/>
    </location>
</feature>
<feature type="active site" description="Nucleophile" evidence="1">
    <location>
        <position position="111"/>
    </location>
</feature>
<feature type="active site" evidence="1">
    <location>
        <position position="136"/>
    </location>
</feature>